<accession>Q8EHB5</accession>
<feature type="chain" id="PRO_0000250057" description="Anhydro-N-acetylmuramic acid kinase">
    <location>
        <begin position="1"/>
        <end position="369"/>
    </location>
</feature>
<feature type="binding site" evidence="1">
    <location>
        <begin position="12"/>
        <end position="19"/>
    </location>
    <ligand>
        <name>ATP</name>
        <dbReference type="ChEBI" id="CHEBI:30616"/>
    </ligand>
</feature>
<feature type="strand" evidence="2">
    <location>
        <begin position="5"/>
        <end position="11"/>
    </location>
</feature>
<feature type="strand" evidence="2">
    <location>
        <begin position="18"/>
        <end position="24"/>
    </location>
</feature>
<feature type="strand" evidence="2">
    <location>
        <begin position="26"/>
        <end position="29"/>
    </location>
</feature>
<feature type="strand" evidence="2">
    <location>
        <begin position="31"/>
        <end position="38"/>
    </location>
</feature>
<feature type="helix" evidence="2">
    <location>
        <begin position="42"/>
        <end position="49"/>
    </location>
</feature>
<feature type="helix" evidence="2">
    <location>
        <begin position="50"/>
        <end position="52"/>
    </location>
</feature>
<feature type="helix" evidence="2">
    <location>
        <begin position="58"/>
        <end position="84"/>
    </location>
</feature>
<feature type="helix" evidence="2">
    <location>
        <begin position="88"/>
        <end position="90"/>
    </location>
</feature>
<feature type="strand" evidence="2">
    <location>
        <begin position="91"/>
        <end position="96"/>
    </location>
</feature>
<feature type="strand" evidence="2">
    <location>
        <begin position="99"/>
        <end position="104"/>
    </location>
</feature>
<feature type="strand" evidence="2">
    <location>
        <begin position="107"/>
        <end position="109"/>
    </location>
</feature>
<feature type="strand" evidence="2">
    <location>
        <begin position="111"/>
        <end position="116"/>
    </location>
</feature>
<feature type="helix" evidence="2">
    <location>
        <begin position="118"/>
        <end position="125"/>
    </location>
</feature>
<feature type="strand" evidence="2">
    <location>
        <begin position="129"/>
        <end position="131"/>
    </location>
</feature>
<feature type="helix" evidence="2">
    <location>
        <begin position="134"/>
        <end position="139"/>
    </location>
</feature>
<feature type="helix" evidence="2">
    <location>
        <begin position="148"/>
        <end position="156"/>
    </location>
</feature>
<feature type="strand" evidence="2">
    <location>
        <begin position="163"/>
        <end position="177"/>
    </location>
</feature>
<feature type="strand" evidence="2">
    <location>
        <begin position="179"/>
        <end position="182"/>
    </location>
</feature>
<feature type="strand" evidence="2">
    <location>
        <begin position="185"/>
        <end position="193"/>
    </location>
</feature>
<feature type="helix" evidence="2">
    <location>
        <begin position="194"/>
        <end position="204"/>
    </location>
</feature>
<feature type="helix" evidence="2">
    <location>
        <begin position="210"/>
        <end position="212"/>
    </location>
</feature>
<feature type="helix" evidence="2">
    <location>
        <begin position="213"/>
        <end position="217"/>
    </location>
</feature>
<feature type="helix" evidence="2">
    <location>
        <begin position="222"/>
        <end position="229"/>
    </location>
</feature>
<feature type="helix" evidence="2">
    <location>
        <begin position="232"/>
        <end position="235"/>
    </location>
</feature>
<feature type="strand" evidence="2">
    <location>
        <begin position="244"/>
        <end position="248"/>
    </location>
</feature>
<feature type="helix" evidence="2">
    <location>
        <begin position="249"/>
        <end position="255"/>
    </location>
</feature>
<feature type="turn" evidence="2">
    <location>
        <begin position="256"/>
        <end position="258"/>
    </location>
</feature>
<feature type="helix" evidence="2">
    <location>
        <begin position="264"/>
        <end position="286"/>
    </location>
</feature>
<feature type="strand" evidence="2">
    <location>
        <begin position="288"/>
        <end position="296"/>
    </location>
</feature>
<feature type="helix" evidence="2">
    <location>
        <begin position="297"/>
        <end position="300"/>
    </location>
</feature>
<feature type="helix" evidence="2">
    <location>
        <begin position="302"/>
        <end position="311"/>
    </location>
</feature>
<feature type="strand" evidence="2">
    <location>
        <begin position="315"/>
        <end position="319"/>
    </location>
</feature>
<feature type="helix" evidence="2">
    <location>
        <begin position="320"/>
        <end position="323"/>
    </location>
</feature>
<feature type="turn" evidence="2">
    <location>
        <begin position="327"/>
        <end position="329"/>
    </location>
</feature>
<feature type="helix" evidence="2">
    <location>
        <begin position="330"/>
        <end position="343"/>
    </location>
</feature>
<feature type="helix" evidence="2">
    <location>
        <begin position="351"/>
        <end position="354"/>
    </location>
</feature>
<feature type="strand" evidence="2">
    <location>
        <begin position="363"/>
        <end position="366"/>
    </location>
</feature>
<dbReference type="EC" id="2.7.1.170" evidence="1"/>
<dbReference type="EMBL" id="AE014299">
    <property type="protein sequence ID" value="AAN54378.1"/>
    <property type="molecule type" value="Genomic_DNA"/>
</dbReference>
<dbReference type="RefSeq" id="NP_716933.1">
    <property type="nucleotide sequence ID" value="NC_004347.2"/>
</dbReference>
<dbReference type="RefSeq" id="WP_011071524.1">
    <property type="nucleotide sequence ID" value="NC_004347.2"/>
</dbReference>
<dbReference type="PDB" id="3CQY">
    <property type="method" value="X-ray"/>
    <property type="resolution" value="2.30 A"/>
    <property type="chains" value="A/B=1-369"/>
</dbReference>
<dbReference type="PDBsum" id="3CQY"/>
<dbReference type="SMR" id="Q8EHB5"/>
<dbReference type="STRING" id="211586.SO_1313"/>
<dbReference type="PaxDb" id="211586-SO_1313"/>
<dbReference type="KEGG" id="son:SO_1313"/>
<dbReference type="PATRIC" id="fig|211586.12.peg.1264"/>
<dbReference type="eggNOG" id="COG2377">
    <property type="taxonomic scope" value="Bacteria"/>
</dbReference>
<dbReference type="HOGENOM" id="CLU_038782_0_0_6"/>
<dbReference type="OrthoDB" id="9763949at2"/>
<dbReference type="PhylomeDB" id="Q8EHB5"/>
<dbReference type="BioCyc" id="SONE211586:G1GMP-1213-MONOMER"/>
<dbReference type="BRENDA" id="2.7.1.170">
    <property type="organism ID" value="5706"/>
</dbReference>
<dbReference type="UniPathway" id="UPA00343"/>
<dbReference type="UniPathway" id="UPA00544"/>
<dbReference type="EvolutionaryTrace" id="Q8EHB5"/>
<dbReference type="Proteomes" id="UP000008186">
    <property type="component" value="Chromosome"/>
</dbReference>
<dbReference type="GO" id="GO:0005524">
    <property type="term" value="F:ATP binding"/>
    <property type="evidence" value="ECO:0007669"/>
    <property type="project" value="UniProtKB-UniRule"/>
</dbReference>
<dbReference type="GO" id="GO:0016301">
    <property type="term" value="F:kinase activity"/>
    <property type="evidence" value="ECO:0000318"/>
    <property type="project" value="GO_Central"/>
</dbReference>
<dbReference type="GO" id="GO:0016773">
    <property type="term" value="F:phosphotransferase activity, alcohol group as acceptor"/>
    <property type="evidence" value="ECO:0007669"/>
    <property type="project" value="UniProtKB-UniRule"/>
</dbReference>
<dbReference type="GO" id="GO:0097175">
    <property type="term" value="P:1,6-anhydro-N-acetyl-beta-muramic acid catabolic process"/>
    <property type="evidence" value="ECO:0007669"/>
    <property type="project" value="UniProtKB-UniRule"/>
</dbReference>
<dbReference type="GO" id="GO:0006040">
    <property type="term" value="P:amino sugar metabolic process"/>
    <property type="evidence" value="ECO:0007669"/>
    <property type="project" value="InterPro"/>
</dbReference>
<dbReference type="GO" id="GO:0009254">
    <property type="term" value="P:peptidoglycan turnover"/>
    <property type="evidence" value="ECO:0007669"/>
    <property type="project" value="UniProtKB-UniRule"/>
</dbReference>
<dbReference type="CDD" id="cd24050">
    <property type="entry name" value="ASKHA_NBD_ANMK"/>
    <property type="match status" value="1"/>
</dbReference>
<dbReference type="Gene3D" id="3.30.420.40">
    <property type="match status" value="2"/>
</dbReference>
<dbReference type="HAMAP" id="MF_01270">
    <property type="entry name" value="AnhMurNAc_kinase"/>
    <property type="match status" value="1"/>
</dbReference>
<dbReference type="InterPro" id="IPR005338">
    <property type="entry name" value="Anhydro_N_Ac-Mur_kinase"/>
</dbReference>
<dbReference type="InterPro" id="IPR043129">
    <property type="entry name" value="ATPase_NBD"/>
</dbReference>
<dbReference type="NCBIfam" id="NF007139">
    <property type="entry name" value="PRK09585.1-3"/>
    <property type="match status" value="1"/>
</dbReference>
<dbReference type="NCBIfam" id="NF007148">
    <property type="entry name" value="PRK09585.3-2"/>
    <property type="match status" value="1"/>
</dbReference>
<dbReference type="PANTHER" id="PTHR30605">
    <property type="entry name" value="ANHYDRO-N-ACETYLMURAMIC ACID KINASE"/>
    <property type="match status" value="1"/>
</dbReference>
<dbReference type="PANTHER" id="PTHR30605:SF0">
    <property type="entry name" value="ANHYDRO-N-ACETYLMURAMIC ACID KINASE"/>
    <property type="match status" value="1"/>
</dbReference>
<dbReference type="Pfam" id="PF03702">
    <property type="entry name" value="AnmK"/>
    <property type="match status" value="1"/>
</dbReference>
<dbReference type="SUPFAM" id="SSF53067">
    <property type="entry name" value="Actin-like ATPase domain"/>
    <property type="match status" value="1"/>
</dbReference>
<gene>
    <name evidence="1" type="primary">anmK</name>
    <name type="ordered locus">SO_1313</name>
</gene>
<proteinExistence type="evidence at protein level"/>
<evidence type="ECO:0000255" key="1">
    <source>
        <dbReference type="HAMAP-Rule" id="MF_01270"/>
    </source>
</evidence>
<evidence type="ECO:0007829" key="2">
    <source>
        <dbReference type="PDB" id="3CQY"/>
    </source>
</evidence>
<keyword id="KW-0002">3D-structure</keyword>
<keyword id="KW-0067">ATP-binding</keyword>
<keyword id="KW-0119">Carbohydrate metabolism</keyword>
<keyword id="KW-0418">Kinase</keyword>
<keyword id="KW-0547">Nucleotide-binding</keyword>
<keyword id="KW-1185">Reference proteome</keyword>
<keyword id="KW-0808">Transferase</keyword>
<name>ANMK_SHEON</name>
<organism>
    <name type="scientific">Shewanella oneidensis (strain ATCC 700550 / JCM 31522 / CIP 106686 / LMG 19005 / NCIMB 14063 / MR-1)</name>
    <dbReference type="NCBI Taxonomy" id="211586"/>
    <lineage>
        <taxon>Bacteria</taxon>
        <taxon>Pseudomonadati</taxon>
        <taxon>Pseudomonadota</taxon>
        <taxon>Gammaproteobacteria</taxon>
        <taxon>Alteromonadales</taxon>
        <taxon>Shewanellaceae</taxon>
        <taxon>Shewanella</taxon>
    </lineage>
</organism>
<comment type="function">
    <text evidence="1">Catalyzes the specific phosphorylation of 1,6-anhydro-N-acetylmuramic acid (anhMurNAc) with the simultaneous cleavage of the 1,6-anhydro ring, generating MurNAc-6-P. Is required for the utilization of anhMurNAc either imported from the medium or derived from its own cell wall murein, and thus plays a role in cell wall recycling.</text>
</comment>
<comment type="catalytic activity">
    <reaction evidence="1">
        <text>1,6-anhydro-N-acetyl-beta-muramate + ATP + H2O = N-acetyl-D-muramate 6-phosphate + ADP + H(+)</text>
        <dbReference type="Rhea" id="RHEA:24952"/>
        <dbReference type="ChEBI" id="CHEBI:15377"/>
        <dbReference type="ChEBI" id="CHEBI:15378"/>
        <dbReference type="ChEBI" id="CHEBI:30616"/>
        <dbReference type="ChEBI" id="CHEBI:58690"/>
        <dbReference type="ChEBI" id="CHEBI:58722"/>
        <dbReference type="ChEBI" id="CHEBI:456216"/>
        <dbReference type="EC" id="2.7.1.170"/>
    </reaction>
</comment>
<comment type="pathway">
    <text evidence="1">Amino-sugar metabolism; 1,6-anhydro-N-acetylmuramate degradation.</text>
</comment>
<comment type="pathway">
    <text evidence="1">Cell wall biogenesis; peptidoglycan recycling.</text>
</comment>
<comment type="similarity">
    <text evidence="1">Belongs to the anhydro-N-acetylmuramic acid kinase family.</text>
</comment>
<protein>
    <recommendedName>
        <fullName evidence="1">Anhydro-N-acetylmuramic acid kinase</fullName>
        <ecNumber evidence="1">2.7.1.170</ecNumber>
    </recommendedName>
    <alternativeName>
        <fullName evidence="1">AnhMurNAc kinase</fullName>
    </alternativeName>
</protein>
<reference key="1">
    <citation type="journal article" date="2002" name="Nat. Biotechnol.">
        <title>Genome sequence of the dissimilatory metal ion-reducing bacterium Shewanella oneidensis.</title>
        <authorList>
            <person name="Heidelberg J.F."/>
            <person name="Paulsen I.T."/>
            <person name="Nelson K.E."/>
            <person name="Gaidos E.J."/>
            <person name="Nelson W.C."/>
            <person name="Read T.D."/>
            <person name="Eisen J.A."/>
            <person name="Seshadri R."/>
            <person name="Ward N.L."/>
            <person name="Methe B.A."/>
            <person name="Clayton R.A."/>
            <person name="Meyer T."/>
            <person name="Tsapin A."/>
            <person name="Scott J."/>
            <person name="Beanan M.J."/>
            <person name="Brinkac L.M."/>
            <person name="Daugherty S.C."/>
            <person name="DeBoy R.T."/>
            <person name="Dodson R.J."/>
            <person name="Durkin A.S."/>
            <person name="Haft D.H."/>
            <person name="Kolonay J.F."/>
            <person name="Madupu R."/>
            <person name="Peterson J.D."/>
            <person name="Umayam L.A."/>
            <person name="White O."/>
            <person name="Wolf A.M."/>
            <person name="Vamathevan J.J."/>
            <person name="Weidman J.F."/>
            <person name="Impraim M."/>
            <person name="Lee K."/>
            <person name="Berry K.J."/>
            <person name="Lee C."/>
            <person name="Mueller J."/>
            <person name="Khouri H.M."/>
            <person name="Gill J."/>
            <person name="Utterback T.R."/>
            <person name="McDonald L.A."/>
            <person name="Feldblyum T.V."/>
            <person name="Smith H.O."/>
            <person name="Venter J.C."/>
            <person name="Nealson K.H."/>
            <person name="Fraser C.M."/>
        </authorList>
    </citation>
    <scope>NUCLEOTIDE SEQUENCE [LARGE SCALE GENOMIC DNA]</scope>
    <source>
        <strain>ATCC 700550 / JCM 31522 / CIP 106686 / LMG 19005 / NCIMB 14063 / MR-1</strain>
    </source>
</reference>
<sequence>MNKAYYIGLMSGTSMDGVDAVLVDFAGEQPQLIGTHTETIPTHLLKGLQRLCLPGTDEINRLGRLDRSVGKLFALAVNNLLAKTKIAKDEIIAIGSHGQTVRHMPNLEVGFTLQIGDPNTIATETGIDVIADFRRKDIALGGQGAPLVPAFHQQTFAQVGKKRVILNIGGIANITYLPGNSEEVLGFDTGPGNTLIDAWVQQVKNESYDKNGAWAASGKTDPQLLAQLLSHPYFSLAYPKSTGRELFNQAWLEQQLSAFNQLNEEDIQSTLLDLTCHSIAQDILKLAQEGELFVCGGGAFNAELMQRLAALLPGYRIDTTSALGVDPKWAEGIAFAWLAMRYQLGLPANLPAVTGASREAILGGRFSAK</sequence>